<evidence type="ECO:0000250" key="1">
    <source>
        <dbReference type="UniProtKB" id="P00441"/>
    </source>
</evidence>
<evidence type="ECO:0000250" key="2">
    <source>
        <dbReference type="UniProtKB" id="P00442"/>
    </source>
</evidence>
<evidence type="ECO:0000250" key="3">
    <source>
        <dbReference type="UniProtKB" id="P07632"/>
    </source>
</evidence>
<evidence type="ECO:0000250" key="4">
    <source>
        <dbReference type="UniProtKB" id="P08228"/>
    </source>
</evidence>
<evidence type="ECO:0000255" key="5">
    <source>
        <dbReference type="RuleBase" id="RU000393"/>
    </source>
</evidence>
<evidence type="ECO:0000256" key="6">
    <source>
        <dbReference type="SAM" id="MobiDB-lite"/>
    </source>
</evidence>
<evidence type="ECO:0000269" key="7">
    <source>
    </source>
</evidence>
<evidence type="ECO:0000303" key="8">
    <source>
    </source>
</evidence>
<evidence type="ECO:0000305" key="9"/>
<evidence type="ECO:0000312" key="10">
    <source>
        <dbReference type="EMBL" id="AEF32527.1"/>
    </source>
</evidence>
<comment type="function">
    <text evidence="2 5">Destroys radicals which are normally produced within the cells and which are toxic to biological systems.</text>
</comment>
<comment type="catalytic activity">
    <reaction evidence="2 5">
        <text>2 superoxide + 2 H(+) = H2O2 + O2</text>
        <dbReference type="Rhea" id="RHEA:20696"/>
        <dbReference type="ChEBI" id="CHEBI:15378"/>
        <dbReference type="ChEBI" id="CHEBI:15379"/>
        <dbReference type="ChEBI" id="CHEBI:16240"/>
        <dbReference type="ChEBI" id="CHEBI:18421"/>
        <dbReference type="EC" id="1.15.1.1"/>
    </reaction>
</comment>
<comment type="cofactor">
    <cofactor evidence="1 5">
        <name>Cu cation</name>
        <dbReference type="ChEBI" id="CHEBI:23378"/>
    </cofactor>
    <text evidence="1 5">Binds 1 copper ion per subunit.</text>
</comment>
<comment type="cofactor">
    <cofactor evidence="1 5">
        <name>Zn(2+)</name>
        <dbReference type="ChEBI" id="CHEBI:29105"/>
    </cofactor>
    <text evidence="1 5">Binds 1 zinc ion per subunit.</text>
</comment>
<comment type="subunit">
    <text evidence="1 4">Homodimer; non-disulfide-linked (By similarity). Heterodimer with SOD1. The heterodimer CCS:SOD1 interacts with SLC31A1; this heterotrimer is Cu(1+)-mediated and its maintenance is regulated through SOD1 activation (By similarity).</text>
</comment>
<comment type="subcellular location">
    <subcellularLocation>
        <location evidence="1">Cytoplasm</location>
    </subcellularLocation>
    <subcellularLocation>
        <location evidence="1">Nucleus</location>
    </subcellularLocation>
</comment>
<comment type="tissue specificity">
    <text evidence="7">Highly expressed in liver. Also expressed in testis and to a lesser extent in kidney, lung and spleen.</text>
</comment>
<comment type="PTM">
    <text evidence="1">Palmitoylation helps nuclear targeting and decreases catalytic activity.</text>
</comment>
<comment type="PTM">
    <text evidence="1">Succinylation, adjacent to copper catalytic site, probably inhibits activity. Desuccinylation by SIRT5 enhances activity.</text>
</comment>
<comment type="similarity">
    <text evidence="5 9">Belongs to the Cu-Zn superoxide dismutase family.</text>
</comment>
<keyword id="KW-0007">Acetylation</keyword>
<keyword id="KW-0049">Antioxidant</keyword>
<keyword id="KW-0186">Copper</keyword>
<keyword id="KW-0963">Cytoplasm</keyword>
<keyword id="KW-1015">Disulfide bond</keyword>
<keyword id="KW-0449">Lipoprotein</keyword>
<keyword id="KW-0479">Metal-binding</keyword>
<keyword id="KW-0539">Nucleus</keyword>
<keyword id="KW-0560">Oxidoreductase</keyword>
<keyword id="KW-0564">Palmitate</keyword>
<keyword id="KW-0597">Phosphoprotein</keyword>
<keyword id="KW-0862">Zinc</keyword>
<protein>
    <recommendedName>
        <fullName evidence="5 8">Superoxide dismutase [Cu-Zn]</fullName>
        <ecNumber evidence="2 5">1.15.1.1</ecNumber>
    </recommendedName>
</protein>
<name>SODC_CAMDR</name>
<gene>
    <name evidence="8" type="primary">SOD1</name>
</gene>
<feature type="initiator methionine" description="Removed" evidence="2">
    <location>
        <position position="1"/>
    </location>
</feature>
<feature type="chain" id="PRO_0000438320" description="Superoxide dismutase [Cu-Zn]">
    <location>
        <begin position="2"/>
        <end position="153"/>
    </location>
</feature>
<feature type="region of interest" description="Disordered" evidence="6">
    <location>
        <begin position="59"/>
        <end position="79"/>
    </location>
</feature>
<feature type="binding site" evidence="2">
    <location>
        <position position="46"/>
    </location>
    <ligand>
        <name>Cu cation</name>
        <dbReference type="ChEBI" id="CHEBI:23378"/>
        <note>catalytic</note>
    </ligand>
</feature>
<feature type="binding site" evidence="2">
    <location>
        <position position="48"/>
    </location>
    <ligand>
        <name>Cu cation</name>
        <dbReference type="ChEBI" id="CHEBI:23378"/>
        <note>catalytic</note>
    </ligand>
</feature>
<feature type="binding site" evidence="2">
    <location>
        <position position="63"/>
    </location>
    <ligand>
        <name>Cu cation</name>
        <dbReference type="ChEBI" id="CHEBI:23378"/>
        <note>catalytic</note>
    </ligand>
</feature>
<feature type="binding site" evidence="2">
    <location>
        <position position="63"/>
    </location>
    <ligand>
        <name>Zn(2+)</name>
        <dbReference type="ChEBI" id="CHEBI:29105"/>
        <note>structural</note>
    </ligand>
</feature>
<feature type="binding site" evidence="2">
    <location>
        <position position="71"/>
    </location>
    <ligand>
        <name>Zn(2+)</name>
        <dbReference type="ChEBI" id="CHEBI:29105"/>
        <note>structural</note>
    </ligand>
</feature>
<feature type="binding site" evidence="2">
    <location>
        <position position="80"/>
    </location>
    <ligand>
        <name>Zn(2+)</name>
        <dbReference type="ChEBI" id="CHEBI:29105"/>
        <note>structural</note>
    </ligand>
</feature>
<feature type="binding site" evidence="2">
    <location>
        <position position="83"/>
    </location>
    <ligand>
        <name>Zn(2+)</name>
        <dbReference type="ChEBI" id="CHEBI:29105"/>
        <note>structural</note>
    </ligand>
</feature>
<feature type="binding site" evidence="2">
    <location>
        <position position="120"/>
    </location>
    <ligand>
        <name>Cu cation</name>
        <dbReference type="ChEBI" id="CHEBI:23378"/>
        <note>catalytic</note>
    </ligand>
</feature>
<feature type="modified residue" description="N-acetylalanine" evidence="2">
    <location>
        <position position="2"/>
    </location>
</feature>
<feature type="modified residue" description="N6-succinyllysine" evidence="4">
    <location>
        <position position="4"/>
    </location>
</feature>
<feature type="modified residue" description="N6-succinyllysine" evidence="4">
    <location>
        <position position="10"/>
    </location>
</feature>
<feature type="modified residue" description="N6-succinyllysine" evidence="4">
    <location>
        <position position="91"/>
    </location>
</feature>
<feature type="modified residue" description="Phosphoserine" evidence="1">
    <location>
        <position position="98"/>
    </location>
</feature>
<feature type="modified residue" description="Phosphoserine" evidence="3">
    <location>
        <position position="105"/>
    </location>
</feature>
<feature type="modified residue" description="Phosphoserine" evidence="4">
    <location>
        <position position="107"/>
    </location>
</feature>
<feature type="modified residue" description="N6-acetyllysine; alternate" evidence="1">
    <location>
        <position position="122"/>
    </location>
</feature>
<feature type="modified residue" description="N6-succinyllysine; alternate" evidence="1">
    <location>
        <position position="122"/>
    </location>
</feature>
<feature type="modified residue" description="N6-acetyllysine; alternate" evidence="4">
    <location>
        <position position="136"/>
    </location>
</feature>
<feature type="modified residue" description="N6-succinyllysine; alternate" evidence="4">
    <location>
        <position position="136"/>
    </location>
</feature>
<feature type="lipid moiety-binding region" description="S-palmitoyl cysteine" evidence="1">
    <location>
        <position position="7"/>
    </location>
</feature>
<feature type="disulfide bond" evidence="2">
    <location>
        <begin position="57"/>
        <end position="146"/>
    </location>
</feature>
<organism evidence="10">
    <name type="scientific">Camelus dromedarius</name>
    <name type="common">Dromedary</name>
    <name type="synonym">Arabian camel</name>
    <dbReference type="NCBI Taxonomy" id="9838"/>
    <lineage>
        <taxon>Eukaryota</taxon>
        <taxon>Metazoa</taxon>
        <taxon>Chordata</taxon>
        <taxon>Craniata</taxon>
        <taxon>Vertebrata</taxon>
        <taxon>Euteleostomi</taxon>
        <taxon>Mammalia</taxon>
        <taxon>Eutheria</taxon>
        <taxon>Laurasiatheria</taxon>
        <taxon>Artiodactyla</taxon>
        <taxon>Tylopoda</taxon>
        <taxon>Camelidae</taxon>
        <taxon>Camelus</taxon>
    </lineage>
</organism>
<accession>H6BDU4</accession>
<sequence>MALKAVCVLKGDGQVQGTIHFEQKENGPVMVSGSISGLAEGDHGFHVHQFGDNTQGCTSAGPHFNPLSKKHGGPKDQERHVGDLGNVTAGKDGVAIVSIEDPVISLSGDHSIIGRTMVVHEKPDDLGKGGNEESTKTGNAGSRLACGVIGIAQ</sequence>
<dbReference type="EC" id="1.15.1.1" evidence="2 5"/>
<dbReference type="EMBL" id="JF758876">
    <property type="protein sequence ID" value="AEF32527.1"/>
    <property type="molecule type" value="mRNA"/>
</dbReference>
<dbReference type="RefSeq" id="XP_010975659.1">
    <property type="nucleotide sequence ID" value="XM_010977357.1"/>
</dbReference>
<dbReference type="RefSeq" id="XP_031314625.1">
    <property type="nucleotide sequence ID" value="XM_031458765.2"/>
</dbReference>
<dbReference type="SMR" id="H6BDU4"/>
<dbReference type="STRING" id="9838.ENSCDRP00005002504"/>
<dbReference type="GeneID" id="105086775"/>
<dbReference type="OrthoDB" id="2015551at2759"/>
<dbReference type="GO" id="GO:0005737">
    <property type="term" value="C:cytoplasm"/>
    <property type="evidence" value="ECO:0000250"/>
    <property type="project" value="UniProtKB"/>
</dbReference>
<dbReference type="GO" id="GO:0005634">
    <property type="term" value="C:nucleus"/>
    <property type="evidence" value="ECO:0000250"/>
    <property type="project" value="UniProtKB"/>
</dbReference>
<dbReference type="GO" id="GO:0005507">
    <property type="term" value="F:copper ion binding"/>
    <property type="evidence" value="ECO:0000250"/>
    <property type="project" value="UniProtKB"/>
</dbReference>
<dbReference type="GO" id="GO:0042803">
    <property type="term" value="F:protein homodimerization activity"/>
    <property type="evidence" value="ECO:0000250"/>
    <property type="project" value="UniProtKB"/>
</dbReference>
<dbReference type="GO" id="GO:0004784">
    <property type="term" value="F:superoxide dismutase activity"/>
    <property type="evidence" value="ECO:0000250"/>
    <property type="project" value="UniProtKB"/>
</dbReference>
<dbReference type="GO" id="GO:0008270">
    <property type="term" value="F:zinc ion binding"/>
    <property type="evidence" value="ECO:0000250"/>
    <property type="project" value="UniProtKB"/>
</dbReference>
<dbReference type="GO" id="GO:0019430">
    <property type="term" value="P:removal of superoxide radicals"/>
    <property type="evidence" value="ECO:0000250"/>
    <property type="project" value="UniProtKB"/>
</dbReference>
<dbReference type="CDD" id="cd00305">
    <property type="entry name" value="Cu-Zn_Superoxide_Dismutase"/>
    <property type="match status" value="1"/>
</dbReference>
<dbReference type="FunFam" id="2.60.40.200:FF:000001">
    <property type="entry name" value="Superoxide dismutase [Cu-Zn]"/>
    <property type="match status" value="1"/>
</dbReference>
<dbReference type="Gene3D" id="2.60.40.200">
    <property type="entry name" value="Superoxide dismutase, copper/zinc binding domain"/>
    <property type="match status" value="1"/>
</dbReference>
<dbReference type="InterPro" id="IPR036423">
    <property type="entry name" value="SOD-like_Cu/Zn_dom_sf"/>
</dbReference>
<dbReference type="InterPro" id="IPR024134">
    <property type="entry name" value="SOD_Cu/Zn_/chaperone"/>
</dbReference>
<dbReference type="InterPro" id="IPR018152">
    <property type="entry name" value="SOD_Cu/Zn_BS"/>
</dbReference>
<dbReference type="InterPro" id="IPR001424">
    <property type="entry name" value="SOD_Cu_Zn_dom"/>
</dbReference>
<dbReference type="PANTHER" id="PTHR10003">
    <property type="entry name" value="SUPEROXIDE DISMUTASE CU-ZN -RELATED"/>
    <property type="match status" value="1"/>
</dbReference>
<dbReference type="Pfam" id="PF00080">
    <property type="entry name" value="Sod_Cu"/>
    <property type="match status" value="1"/>
</dbReference>
<dbReference type="PRINTS" id="PR00068">
    <property type="entry name" value="CUZNDISMTASE"/>
</dbReference>
<dbReference type="SUPFAM" id="SSF49329">
    <property type="entry name" value="Cu,Zn superoxide dismutase-like"/>
    <property type="match status" value="1"/>
</dbReference>
<dbReference type="PROSITE" id="PS00087">
    <property type="entry name" value="SOD_CU_ZN_1"/>
    <property type="match status" value="1"/>
</dbReference>
<dbReference type="PROSITE" id="PS00332">
    <property type="entry name" value="SOD_CU_ZN_2"/>
    <property type="match status" value="1"/>
</dbReference>
<proteinExistence type="evidence at transcript level"/>
<reference evidence="10" key="1">
    <citation type="journal article" date="2012" name="Int. J. Mol. Sci.">
        <title>Molecular cloning, characterization and predicted structure of a putative copper-zinc SOD from the camel, Camelus dromedarius.</title>
        <authorList>
            <person name="Ataya F.S."/>
            <person name="Fouad D."/>
            <person name="Al-Olayan E."/>
            <person name="Malik A."/>
        </authorList>
    </citation>
    <scope>NUCLEOTIDE SEQUENCE [MRNA]</scope>
    <scope>TISSUE SPECIFICITY</scope>
    <scope>PHYLOGENETIC ANALYSIS</scope>
</reference>